<evidence type="ECO:0000250" key="1"/>
<evidence type="ECO:0000305" key="2"/>
<protein>
    <recommendedName>
        <fullName>Paralytic peptide 2</fullName>
    </recommendedName>
    <alternativeName>
        <fullName>Paralytic peptide II</fullName>
        <shortName>PP II</shortName>
    </alternativeName>
</protein>
<dbReference type="PIR" id="D39855">
    <property type="entry name" value="D39855"/>
</dbReference>
<dbReference type="GO" id="GO:0005615">
    <property type="term" value="C:extracellular space"/>
    <property type="evidence" value="ECO:0007669"/>
    <property type="project" value="UniProtKB-KW"/>
</dbReference>
<dbReference type="GO" id="GO:0005125">
    <property type="term" value="F:cytokine activity"/>
    <property type="evidence" value="ECO:0007669"/>
    <property type="project" value="UniProtKB-KW"/>
</dbReference>
<dbReference type="InterPro" id="IPR003463">
    <property type="entry name" value="GBP_PSP"/>
</dbReference>
<dbReference type="Pfam" id="PF02425">
    <property type="entry name" value="GBP_PSP"/>
    <property type="match status" value="1"/>
</dbReference>
<organism>
    <name type="scientific">Spodoptera exigua</name>
    <name type="common">Beet armyworm</name>
    <name type="synonym">Noctua fulgens</name>
    <dbReference type="NCBI Taxonomy" id="7107"/>
    <lineage>
        <taxon>Eukaryota</taxon>
        <taxon>Metazoa</taxon>
        <taxon>Ecdysozoa</taxon>
        <taxon>Arthropoda</taxon>
        <taxon>Hexapoda</taxon>
        <taxon>Insecta</taxon>
        <taxon>Pterygota</taxon>
        <taxon>Neoptera</taxon>
        <taxon>Endopterygota</taxon>
        <taxon>Lepidoptera</taxon>
        <taxon>Glossata</taxon>
        <taxon>Ditrysia</taxon>
        <taxon>Noctuoidea</taxon>
        <taxon>Noctuidae</taxon>
        <taxon>Amphipyrinae</taxon>
        <taxon>Spodoptera</taxon>
    </lineage>
</organism>
<reference key="1">
    <citation type="journal article" date="1991" name="J. Biol. Chem.">
        <title>Isolation and identification of paralytic peptides from hemolymph of the lepidopteran insects Manduca sexta, Spodoptera exigua, and Heliothis virescens.</title>
        <authorList>
            <person name="Skinner W.S."/>
            <person name="Dennis P.A."/>
            <person name="Li J.P."/>
            <person name="Summerfelt R.M."/>
            <person name="Carney R.L."/>
            <person name="Quistad G.B."/>
        </authorList>
    </citation>
    <scope>PROTEIN SEQUENCE</scope>
    <source>
        <tissue>Hemolymph</tissue>
    </source>
</reference>
<feature type="peptide" id="PRO_0000043914" description="Paralytic peptide 2">
    <location>
        <begin position="1"/>
        <end position="23"/>
    </location>
</feature>
<feature type="disulfide bond" evidence="1">
    <location>
        <begin position="7"/>
        <end position="19"/>
    </location>
</feature>
<name>PAP2_SPOEX</name>
<proteinExistence type="evidence at protein level"/>
<comment type="function">
    <text>Causes rapid, rigid paralysis when injected into Lepidopteran larvae. The physiological role may be to reduce hemolymph loss following injury and promote wound healing.</text>
</comment>
<comment type="tissue specificity">
    <text>Hemolymph.</text>
</comment>
<comment type="similarity">
    <text evidence="2">Belongs to the GBP/PSP1/paralytic peptide family.</text>
</comment>
<sequence length="23" mass="2477">ENFAGGCTPGYQRTADGRCKPTF</sequence>
<accession>P30256</accession>
<keyword id="KW-0202">Cytokine</keyword>
<keyword id="KW-0903">Direct protein sequencing</keyword>
<keyword id="KW-1015">Disulfide bond</keyword>